<organism>
    <name type="scientific">Acidovorax ebreus (strain TPSY)</name>
    <name type="common">Diaphorobacter sp. (strain TPSY)</name>
    <dbReference type="NCBI Taxonomy" id="535289"/>
    <lineage>
        <taxon>Bacteria</taxon>
        <taxon>Pseudomonadati</taxon>
        <taxon>Pseudomonadota</taxon>
        <taxon>Betaproteobacteria</taxon>
        <taxon>Burkholderiales</taxon>
        <taxon>Comamonadaceae</taxon>
        <taxon>Diaphorobacter</taxon>
    </lineage>
</organism>
<keyword id="KW-1185">Reference proteome</keyword>
<keyword id="KW-0687">Ribonucleoprotein</keyword>
<keyword id="KW-0689">Ribosomal protein</keyword>
<keyword id="KW-0694">RNA-binding</keyword>
<keyword id="KW-0699">rRNA-binding</keyword>
<protein>
    <recommendedName>
        <fullName evidence="1">Large ribosomal subunit protein bL25</fullName>
    </recommendedName>
    <alternativeName>
        <fullName evidence="2">50S ribosomal protein L25</fullName>
    </alternativeName>
    <alternativeName>
        <fullName evidence="1">General stress protein CTC</fullName>
    </alternativeName>
</protein>
<reference key="1">
    <citation type="submission" date="2009-01" db="EMBL/GenBank/DDBJ databases">
        <title>Complete sequence of Diaphorobacter sp. TPSY.</title>
        <authorList>
            <consortium name="US DOE Joint Genome Institute"/>
            <person name="Lucas S."/>
            <person name="Copeland A."/>
            <person name="Lapidus A."/>
            <person name="Glavina del Rio T."/>
            <person name="Tice H."/>
            <person name="Bruce D."/>
            <person name="Goodwin L."/>
            <person name="Pitluck S."/>
            <person name="Chertkov O."/>
            <person name="Brettin T."/>
            <person name="Detter J.C."/>
            <person name="Han C."/>
            <person name="Larimer F."/>
            <person name="Land M."/>
            <person name="Hauser L."/>
            <person name="Kyrpides N."/>
            <person name="Mikhailova N."/>
            <person name="Coates J.D."/>
        </authorList>
    </citation>
    <scope>NUCLEOTIDE SEQUENCE [LARGE SCALE GENOMIC DNA]</scope>
    <source>
        <strain>TPSY</strain>
    </source>
</reference>
<feature type="chain" id="PRO_1000166170" description="Large ribosomal subunit protein bL25">
    <location>
        <begin position="1"/>
        <end position="208"/>
    </location>
</feature>
<dbReference type="EMBL" id="CP001392">
    <property type="protein sequence ID" value="ACM32301.1"/>
    <property type="molecule type" value="Genomic_DNA"/>
</dbReference>
<dbReference type="RefSeq" id="WP_011804338.1">
    <property type="nucleotide sequence ID" value="NC_011992.1"/>
</dbReference>
<dbReference type="SMR" id="B9ME47"/>
<dbReference type="KEGG" id="dia:Dtpsy_0823"/>
<dbReference type="eggNOG" id="COG1825">
    <property type="taxonomic scope" value="Bacteria"/>
</dbReference>
<dbReference type="HOGENOM" id="CLU_075939_0_1_4"/>
<dbReference type="Proteomes" id="UP000000450">
    <property type="component" value="Chromosome"/>
</dbReference>
<dbReference type="GO" id="GO:0022625">
    <property type="term" value="C:cytosolic large ribosomal subunit"/>
    <property type="evidence" value="ECO:0007669"/>
    <property type="project" value="TreeGrafter"/>
</dbReference>
<dbReference type="GO" id="GO:0008097">
    <property type="term" value="F:5S rRNA binding"/>
    <property type="evidence" value="ECO:0007669"/>
    <property type="project" value="InterPro"/>
</dbReference>
<dbReference type="GO" id="GO:0003735">
    <property type="term" value="F:structural constituent of ribosome"/>
    <property type="evidence" value="ECO:0007669"/>
    <property type="project" value="InterPro"/>
</dbReference>
<dbReference type="GO" id="GO:0006412">
    <property type="term" value="P:translation"/>
    <property type="evidence" value="ECO:0007669"/>
    <property type="project" value="UniProtKB-UniRule"/>
</dbReference>
<dbReference type="CDD" id="cd00495">
    <property type="entry name" value="Ribosomal_L25_TL5_CTC"/>
    <property type="match status" value="1"/>
</dbReference>
<dbReference type="Gene3D" id="2.170.120.20">
    <property type="entry name" value="Ribosomal protein L25, beta domain"/>
    <property type="match status" value="1"/>
</dbReference>
<dbReference type="Gene3D" id="2.40.240.10">
    <property type="entry name" value="Ribosomal Protein L25, Chain P"/>
    <property type="match status" value="1"/>
</dbReference>
<dbReference type="HAMAP" id="MF_01336">
    <property type="entry name" value="Ribosomal_bL25"/>
    <property type="match status" value="1"/>
</dbReference>
<dbReference type="HAMAP" id="MF_01334">
    <property type="entry name" value="Ribosomal_bL25_CTC"/>
    <property type="match status" value="1"/>
</dbReference>
<dbReference type="InterPro" id="IPR020056">
    <property type="entry name" value="Rbsml_bL25/Gln-tRNA_synth_N"/>
</dbReference>
<dbReference type="InterPro" id="IPR011035">
    <property type="entry name" value="Ribosomal_bL25/Gln-tRNA_synth"/>
</dbReference>
<dbReference type="InterPro" id="IPR020057">
    <property type="entry name" value="Ribosomal_bL25_b-dom"/>
</dbReference>
<dbReference type="InterPro" id="IPR037121">
    <property type="entry name" value="Ribosomal_bL25_C"/>
</dbReference>
<dbReference type="InterPro" id="IPR001021">
    <property type="entry name" value="Ribosomal_bL25_long"/>
</dbReference>
<dbReference type="InterPro" id="IPR020055">
    <property type="entry name" value="Ribosomal_bL25_short"/>
</dbReference>
<dbReference type="InterPro" id="IPR029751">
    <property type="entry name" value="Ribosomal_L25_dom"/>
</dbReference>
<dbReference type="InterPro" id="IPR020930">
    <property type="entry name" value="Ribosomal_uL5_bac-type"/>
</dbReference>
<dbReference type="NCBIfam" id="TIGR00731">
    <property type="entry name" value="bL25_bact_ctc"/>
    <property type="match status" value="1"/>
</dbReference>
<dbReference type="NCBIfam" id="NF004130">
    <property type="entry name" value="PRK05618.1-5"/>
    <property type="match status" value="1"/>
</dbReference>
<dbReference type="NCBIfam" id="NF004612">
    <property type="entry name" value="PRK05943.1"/>
    <property type="match status" value="1"/>
</dbReference>
<dbReference type="PANTHER" id="PTHR33284">
    <property type="entry name" value="RIBOSOMAL PROTEIN L25/GLN-TRNA SYNTHETASE, ANTI-CODON-BINDING DOMAIN-CONTAINING PROTEIN"/>
    <property type="match status" value="1"/>
</dbReference>
<dbReference type="PANTHER" id="PTHR33284:SF1">
    <property type="entry name" value="RIBOSOMAL PROTEIN L25_GLN-TRNA SYNTHETASE, ANTI-CODON-BINDING DOMAIN-CONTAINING PROTEIN"/>
    <property type="match status" value="1"/>
</dbReference>
<dbReference type="Pfam" id="PF01386">
    <property type="entry name" value="Ribosomal_L25p"/>
    <property type="match status" value="1"/>
</dbReference>
<dbReference type="Pfam" id="PF14693">
    <property type="entry name" value="Ribosomal_TL5_C"/>
    <property type="match status" value="1"/>
</dbReference>
<dbReference type="SUPFAM" id="SSF50715">
    <property type="entry name" value="Ribosomal protein L25-like"/>
    <property type="match status" value="1"/>
</dbReference>
<accession>B9ME47</accession>
<proteinExistence type="inferred from homology"/>
<name>RL25_ACIET</name>
<evidence type="ECO:0000255" key="1">
    <source>
        <dbReference type="HAMAP-Rule" id="MF_01334"/>
    </source>
</evidence>
<evidence type="ECO:0000305" key="2"/>
<comment type="function">
    <text evidence="1">This is one of the proteins that binds to the 5S RNA in the ribosome where it forms part of the central protuberance.</text>
</comment>
<comment type="subunit">
    <text evidence="1">Part of the 50S ribosomal subunit; part of the 5S rRNA/L5/L18/L25 subcomplex. Contacts the 5S rRNA. Binds to the 5S rRNA independently of L5 and L18.</text>
</comment>
<comment type="similarity">
    <text evidence="1">Belongs to the bacterial ribosomal protein bL25 family. CTC subfamily.</text>
</comment>
<gene>
    <name evidence="1" type="primary">rplY</name>
    <name evidence="1" type="synonym">ctc</name>
    <name type="ordered locus">Dtpsy_0823</name>
</gene>
<sequence length="208" mass="22565">MQFVAFERAKQGTGASRRLRISGKAPGIVYGGSAEPQLIEIDHNALWHALKKEAFHSSILDMELNGQVTKVLLRDVQYHPFKQQVLHVDFQRVDEKTRVHLKVPLHFEGVEGSQAVKVEGCTVTPLIHELDVMCMPAQLPEFIKVDLSGLTSKSTMGLQSVKLPHGVKAVVRGSNKNPALVSIKLPEVVADATAAAAPAAAPAKKGKK</sequence>